<organism>
    <name type="scientific">Arabidopsis thaliana</name>
    <name type="common">Mouse-ear cress</name>
    <dbReference type="NCBI Taxonomy" id="3702"/>
    <lineage>
        <taxon>Eukaryota</taxon>
        <taxon>Viridiplantae</taxon>
        <taxon>Streptophyta</taxon>
        <taxon>Embryophyta</taxon>
        <taxon>Tracheophyta</taxon>
        <taxon>Spermatophyta</taxon>
        <taxon>Magnoliopsida</taxon>
        <taxon>eudicotyledons</taxon>
        <taxon>Gunneridae</taxon>
        <taxon>Pentapetalae</taxon>
        <taxon>rosids</taxon>
        <taxon>malvids</taxon>
        <taxon>Brassicales</taxon>
        <taxon>Brassicaceae</taxon>
        <taxon>Camelineae</taxon>
        <taxon>Arabidopsis</taxon>
    </lineage>
</organism>
<reference key="1">
    <citation type="journal article" date="1999" name="Nature">
        <title>Sequence and analysis of chromosome 2 of the plant Arabidopsis thaliana.</title>
        <authorList>
            <person name="Lin X."/>
            <person name="Kaul S."/>
            <person name="Rounsley S.D."/>
            <person name="Shea T.P."/>
            <person name="Benito M.-I."/>
            <person name="Town C.D."/>
            <person name="Fujii C.Y."/>
            <person name="Mason T.M."/>
            <person name="Bowman C.L."/>
            <person name="Barnstead M.E."/>
            <person name="Feldblyum T.V."/>
            <person name="Buell C.R."/>
            <person name="Ketchum K.A."/>
            <person name="Lee J.J."/>
            <person name="Ronning C.M."/>
            <person name="Koo H.L."/>
            <person name="Moffat K.S."/>
            <person name="Cronin L.A."/>
            <person name="Shen M."/>
            <person name="Pai G."/>
            <person name="Van Aken S."/>
            <person name="Umayam L."/>
            <person name="Tallon L.J."/>
            <person name="Gill J.E."/>
            <person name="Adams M.D."/>
            <person name="Carrera A.J."/>
            <person name="Creasy T.H."/>
            <person name="Goodman H.M."/>
            <person name="Somerville C.R."/>
            <person name="Copenhaver G.P."/>
            <person name="Preuss D."/>
            <person name="Nierman W.C."/>
            <person name="White O."/>
            <person name="Eisen J.A."/>
            <person name="Salzberg S.L."/>
            <person name="Fraser C.M."/>
            <person name="Venter J.C."/>
        </authorList>
    </citation>
    <scope>NUCLEOTIDE SEQUENCE [LARGE SCALE GENOMIC DNA]</scope>
    <source>
        <strain>cv. Columbia</strain>
    </source>
</reference>
<reference key="2">
    <citation type="journal article" date="2017" name="Plant J.">
        <title>Araport11: a complete reannotation of the Arabidopsis thaliana reference genome.</title>
        <authorList>
            <person name="Cheng C.Y."/>
            <person name="Krishnakumar V."/>
            <person name="Chan A.P."/>
            <person name="Thibaud-Nissen F."/>
            <person name="Schobel S."/>
            <person name="Town C.D."/>
        </authorList>
    </citation>
    <scope>GENOME REANNOTATION</scope>
    <source>
        <strain>cv. Columbia</strain>
    </source>
</reference>
<reference key="3">
    <citation type="journal article" date="2003" name="Science">
        <title>Empirical analysis of transcriptional activity in the Arabidopsis genome.</title>
        <authorList>
            <person name="Yamada K."/>
            <person name="Lim J."/>
            <person name="Dale J.M."/>
            <person name="Chen H."/>
            <person name="Shinn P."/>
            <person name="Palm C.J."/>
            <person name="Southwick A.M."/>
            <person name="Wu H.C."/>
            <person name="Kim C.J."/>
            <person name="Nguyen M."/>
            <person name="Pham P.K."/>
            <person name="Cheuk R.F."/>
            <person name="Karlin-Newmann G."/>
            <person name="Liu S.X."/>
            <person name="Lam B."/>
            <person name="Sakano H."/>
            <person name="Wu T."/>
            <person name="Yu G."/>
            <person name="Miranda M."/>
            <person name="Quach H.L."/>
            <person name="Tripp M."/>
            <person name="Chang C.H."/>
            <person name="Lee J.M."/>
            <person name="Toriumi M.J."/>
            <person name="Chan M.M."/>
            <person name="Tang C.C."/>
            <person name="Onodera C.S."/>
            <person name="Deng J.M."/>
            <person name="Akiyama K."/>
            <person name="Ansari Y."/>
            <person name="Arakawa T."/>
            <person name="Banh J."/>
            <person name="Banno F."/>
            <person name="Bowser L."/>
            <person name="Brooks S.Y."/>
            <person name="Carninci P."/>
            <person name="Chao Q."/>
            <person name="Choy N."/>
            <person name="Enju A."/>
            <person name="Goldsmith A.D."/>
            <person name="Gurjal M."/>
            <person name="Hansen N.F."/>
            <person name="Hayashizaki Y."/>
            <person name="Johnson-Hopson C."/>
            <person name="Hsuan V.W."/>
            <person name="Iida K."/>
            <person name="Karnes M."/>
            <person name="Khan S."/>
            <person name="Koesema E."/>
            <person name="Ishida J."/>
            <person name="Jiang P.X."/>
            <person name="Jones T."/>
            <person name="Kawai J."/>
            <person name="Kamiya A."/>
            <person name="Meyers C."/>
            <person name="Nakajima M."/>
            <person name="Narusaka M."/>
            <person name="Seki M."/>
            <person name="Sakurai T."/>
            <person name="Satou M."/>
            <person name="Tamse R."/>
            <person name="Vaysberg M."/>
            <person name="Wallender E.K."/>
            <person name="Wong C."/>
            <person name="Yamamura Y."/>
            <person name="Yuan S."/>
            <person name="Shinozaki K."/>
            <person name="Davis R.W."/>
            <person name="Theologis A."/>
            <person name="Ecker J.R."/>
        </authorList>
    </citation>
    <scope>NUCLEOTIDE SEQUENCE [LARGE SCALE MRNA]</scope>
    <source>
        <strain>cv. Columbia</strain>
    </source>
</reference>
<reference key="4">
    <citation type="journal article" date="2006" name="Plant Physiol.">
        <title>Arabidopsis orthologs of maize chloroplast splicing factors promote splicing of orthologous and species-specific group II introns.</title>
        <authorList>
            <person name="Asakura Y."/>
            <person name="Barkan A."/>
        </authorList>
    </citation>
    <scope>FUNCTION</scope>
    <scope>DISRUPTION PHENOTYPE</scope>
</reference>
<dbReference type="EMBL" id="AC006081">
    <property type="protein sequence ID" value="AAD24394.2"/>
    <property type="molecule type" value="Genomic_DNA"/>
</dbReference>
<dbReference type="EMBL" id="CP002685">
    <property type="protein sequence ID" value="AEC06956.1"/>
    <property type="molecule type" value="Genomic_DNA"/>
</dbReference>
<dbReference type="EMBL" id="AY045882">
    <property type="protein sequence ID" value="AAK76556.1"/>
    <property type="molecule type" value="mRNA"/>
</dbReference>
<dbReference type="EMBL" id="BT004337">
    <property type="protein sequence ID" value="AAO42331.1"/>
    <property type="molecule type" value="mRNA"/>
</dbReference>
<dbReference type="PIR" id="A84584">
    <property type="entry name" value="A84584"/>
</dbReference>
<dbReference type="RefSeq" id="NP_565462.1">
    <property type="nucleotide sequence ID" value="NM_127560.4"/>
</dbReference>
<dbReference type="SMR" id="Q9SL79"/>
<dbReference type="FunCoup" id="Q9SL79">
    <property type="interactions" value="1301"/>
</dbReference>
<dbReference type="STRING" id="3702.Q9SL79"/>
<dbReference type="PaxDb" id="3702-AT2G20020.1"/>
<dbReference type="ProteomicsDB" id="239174"/>
<dbReference type="EnsemblPlants" id="AT2G20020.1">
    <property type="protein sequence ID" value="AT2G20020.1"/>
    <property type="gene ID" value="AT2G20020"/>
</dbReference>
<dbReference type="GeneID" id="816521"/>
<dbReference type="Gramene" id="AT2G20020.1">
    <property type="protein sequence ID" value="AT2G20020.1"/>
    <property type="gene ID" value="AT2G20020"/>
</dbReference>
<dbReference type="KEGG" id="ath:AT2G20020"/>
<dbReference type="Araport" id="AT2G20020"/>
<dbReference type="TAIR" id="AT2G20020">
    <property type="gene designation" value="CAF1"/>
</dbReference>
<dbReference type="eggNOG" id="ENOG502QQC4">
    <property type="taxonomic scope" value="Eukaryota"/>
</dbReference>
<dbReference type="HOGENOM" id="CLU_012688_0_0_1"/>
<dbReference type="InParanoid" id="Q9SL79"/>
<dbReference type="OMA" id="FTHNMLD"/>
<dbReference type="OrthoDB" id="2021019at2759"/>
<dbReference type="PhylomeDB" id="Q9SL79"/>
<dbReference type="PRO" id="PR:Q9SL79"/>
<dbReference type="Proteomes" id="UP000006548">
    <property type="component" value="Chromosome 2"/>
</dbReference>
<dbReference type="ExpressionAtlas" id="Q9SL79">
    <property type="expression patterns" value="baseline and differential"/>
</dbReference>
<dbReference type="GO" id="GO:0009570">
    <property type="term" value="C:chloroplast stroma"/>
    <property type="evidence" value="ECO:0007669"/>
    <property type="project" value="UniProtKB-SubCell"/>
</dbReference>
<dbReference type="GO" id="GO:1990904">
    <property type="term" value="C:ribonucleoprotein complex"/>
    <property type="evidence" value="ECO:0007669"/>
    <property type="project" value="UniProtKB-KW"/>
</dbReference>
<dbReference type="GO" id="GO:0003729">
    <property type="term" value="F:mRNA binding"/>
    <property type="evidence" value="ECO:0000314"/>
    <property type="project" value="TAIR"/>
</dbReference>
<dbReference type="GO" id="GO:0000373">
    <property type="term" value="P:Group II intron splicing"/>
    <property type="evidence" value="ECO:0000314"/>
    <property type="project" value="TAIR"/>
</dbReference>
<dbReference type="GO" id="GO:0006397">
    <property type="term" value="P:mRNA processing"/>
    <property type="evidence" value="ECO:0007669"/>
    <property type="project" value="UniProtKB-KW"/>
</dbReference>
<dbReference type="FunFam" id="3.30.110.60:FF:000002">
    <property type="entry name" value="CRS2-associated factor 1, chloroplastic"/>
    <property type="match status" value="2"/>
</dbReference>
<dbReference type="Gene3D" id="3.30.110.60">
    <property type="entry name" value="YhbY-like"/>
    <property type="match status" value="2"/>
</dbReference>
<dbReference type="InterPro" id="IPR044599">
    <property type="entry name" value="CAF1P_plant"/>
</dbReference>
<dbReference type="InterPro" id="IPR001890">
    <property type="entry name" value="RNA-binding_CRM"/>
</dbReference>
<dbReference type="InterPro" id="IPR035920">
    <property type="entry name" value="YhbY-like_sf"/>
</dbReference>
<dbReference type="PANTHER" id="PTHR46247">
    <property type="entry name" value="CRS2-ASSOCIATED FACTOR 1, CHLOROPLASTIC"/>
    <property type="match status" value="1"/>
</dbReference>
<dbReference type="PANTHER" id="PTHR46247:SF1">
    <property type="entry name" value="CRS2-ASSOCIATED FACTOR 1, CHLOROPLASTIC"/>
    <property type="match status" value="1"/>
</dbReference>
<dbReference type="Pfam" id="PF01985">
    <property type="entry name" value="CRS1_YhbY"/>
    <property type="match status" value="2"/>
</dbReference>
<dbReference type="SMART" id="SM01103">
    <property type="entry name" value="CRS1_YhbY"/>
    <property type="match status" value="2"/>
</dbReference>
<dbReference type="SUPFAM" id="SSF75471">
    <property type="entry name" value="YhbY-like"/>
    <property type="match status" value="2"/>
</dbReference>
<dbReference type="PROSITE" id="PS51295">
    <property type="entry name" value="CRM"/>
    <property type="match status" value="2"/>
</dbReference>
<keyword id="KW-0150">Chloroplast</keyword>
<keyword id="KW-0507">mRNA processing</keyword>
<keyword id="KW-0508">mRNA splicing</keyword>
<keyword id="KW-0934">Plastid</keyword>
<keyword id="KW-1185">Reference proteome</keyword>
<keyword id="KW-0677">Repeat</keyword>
<keyword id="KW-0687">Ribonucleoprotein</keyword>
<keyword id="KW-0694">RNA-binding</keyword>
<keyword id="KW-0809">Transit peptide</keyword>
<gene>
    <name type="ordered locus">At2g20020</name>
    <name type="ORF">T2G17.18</name>
</gene>
<proteinExistence type="evidence at transcript level"/>
<comment type="function">
    <text evidence="5">Required for the splicing of group IIB introns in chloroplasts. Forms splicing particles with CRS2. Interacts with RNA and confers intron specificity of the splicing particles.</text>
</comment>
<comment type="subunit">
    <text evidence="1">Interacts with CRS2 and RNA. Part of large ribonucleo-protein complexes that include group IIB introns, CRS2 and CAF1 (By similarity).</text>
</comment>
<comment type="subcellular location">
    <subcellularLocation>
        <location evidence="6">Plastid</location>
        <location evidence="6">Chloroplast stroma</location>
    </subcellularLocation>
</comment>
<comment type="disruption phenotype">
    <text evidence="5">Plants are albinos.</text>
</comment>
<evidence type="ECO:0000250" key="1"/>
<evidence type="ECO:0000255" key="2"/>
<evidence type="ECO:0000255" key="3">
    <source>
        <dbReference type="PROSITE-ProRule" id="PRU00626"/>
    </source>
</evidence>
<evidence type="ECO:0000256" key="4">
    <source>
        <dbReference type="SAM" id="MobiDB-lite"/>
    </source>
</evidence>
<evidence type="ECO:0000269" key="5">
    <source>
    </source>
</evidence>
<evidence type="ECO:0000305" key="6"/>
<feature type="transit peptide" description="Chloroplast" evidence="2">
    <location>
        <begin position="1"/>
        <end position="37"/>
    </location>
</feature>
<feature type="chain" id="PRO_0000283614" description="CRS2-associated factor 1, chloroplastic">
    <location>
        <begin position="38"/>
        <end position="701"/>
    </location>
</feature>
<feature type="domain" description="CRM 1" evidence="3">
    <location>
        <begin position="241"/>
        <end position="337"/>
    </location>
</feature>
<feature type="domain" description="CRM 2" evidence="3">
    <location>
        <begin position="359"/>
        <end position="455"/>
    </location>
</feature>
<feature type="region of interest" description="Disordered" evidence="4">
    <location>
        <begin position="68"/>
        <end position="136"/>
    </location>
</feature>
<feature type="region of interest" description="Disordered" evidence="4">
    <location>
        <begin position="191"/>
        <end position="221"/>
    </location>
</feature>
<feature type="region of interest" description="Disordered" evidence="4">
    <location>
        <begin position="471"/>
        <end position="532"/>
    </location>
</feature>
<feature type="region of interest" description="CRS2 binding" evidence="1">
    <location>
        <begin position="564"/>
        <end position="586"/>
    </location>
</feature>
<feature type="compositionally biased region" description="Polar residues" evidence="4">
    <location>
        <begin position="479"/>
        <end position="492"/>
    </location>
</feature>
<feature type="compositionally biased region" description="Polar residues" evidence="4">
    <location>
        <begin position="520"/>
        <end position="530"/>
    </location>
</feature>
<sequence length="701" mass="79055">MSLKLNTPFPIFAPSLFPNHNPRAPSEIRFSRWGNANAERFEQRRRSQEELEAEIRRDRRFDAATKIVHTHDSEAAAAEPKTSPFRSRGTPSLPSARSIPGRRSKYSKPDSGPNRPKNKPRVPDSPPQLDAKPEVKLSEDGLTYVINGAPFEFKYSYTETPKVKPLKLREPAYAPFGPTTMGRPWTGRAPLPQSQKTPREFDSFRLPPVGKKGLKPVQKPGPFRPGVGPRYVYSKEEILGEPLTKEEVRELVTSCLKTTRQLNMGRDGLTHNMLNNIHDLWKRRRVCKIKCKGVCTVDMDNVCEQLEEKIGGKVIYRRGGVLFLFRGRNYNHRTRPRFPLMLWKPVAPVYPRLIQQVPEGLTRQEATNMRRKGRELMPICKLGKNGVYCDLVKNVKEAFEVCELVRIDCQGMKGSDFRKIGAKLKDLVPCVLVSFENEQILIWRGREWKSSLTTPDKKGDILEDIEVDTALPEDDEPSVSPNQSQTMTQNPPLDSMELQNDPDGHDLSPSTVDSSEMEGTINSLQSWSTKDVTEPTVDSFLRDLEEPEDEPETSEEISKQSIERVLILMKQAVESGTALVLDAADLDADTVFSKAVAFSSVASPGPVFQHGLRKQPTVKKQESQEFGYGDLEAKSSNVVVSRNASKSSNVVVFGKREVAERGEREEKEEGSKKKMDEFAEDYREVMPHGTLKVDELAKLLA</sequence>
<accession>Q9SL79</accession>
<accession>Q94AQ2</accession>
<protein>
    <recommendedName>
        <fullName>CRS2-associated factor 1, chloroplastic</fullName>
    </recommendedName>
    <alternativeName>
        <fullName>Chloroplastic group IIA intron splicing facilitator CRS2-associated factor 1</fullName>
    </alternativeName>
</protein>
<name>CAF1P_ARATH</name>